<protein>
    <recommendedName>
        <fullName>Probable receptor-like protein kinase At5g18500</fullName>
        <ecNumber>2.7.11.1</ecNumber>
    </recommendedName>
</protein>
<keyword id="KW-0067">ATP-binding</keyword>
<keyword id="KW-1003">Cell membrane</keyword>
<keyword id="KW-0418">Kinase</keyword>
<keyword id="KW-0472">Membrane</keyword>
<keyword id="KW-0547">Nucleotide-binding</keyword>
<keyword id="KW-0597">Phosphoprotein</keyword>
<keyword id="KW-1185">Reference proteome</keyword>
<keyword id="KW-0723">Serine/threonine-protein kinase</keyword>
<keyword id="KW-0808">Transferase</keyword>
<keyword id="KW-0812">Transmembrane</keyword>
<keyword id="KW-1133">Transmembrane helix</keyword>
<evidence type="ECO:0000250" key="1"/>
<evidence type="ECO:0000250" key="2">
    <source>
        <dbReference type="UniProtKB" id="O48814"/>
    </source>
</evidence>
<evidence type="ECO:0000255" key="3"/>
<evidence type="ECO:0000255" key="4">
    <source>
        <dbReference type="PROSITE-ProRule" id="PRU00159"/>
    </source>
</evidence>
<evidence type="ECO:0000255" key="5">
    <source>
        <dbReference type="PROSITE-ProRule" id="PRU10027"/>
    </source>
</evidence>
<evidence type="ECO:0000256" key="6">
    <source>
        <dbReference type="SAM" id="MobiDB-lite"/>
    </source>
</evidence>
<accession>Q8LEB6</accession>
<feature type="chain" id="PRO_0000401339" description="Probable receptor-like protein kinase At5g18500">
    <location>
        <begin position="1"/>
        <end position="484"/>
    </location>
</feature>
<feature type="transmembrane region" description="Helical" evidence="3">
    <location>
        <begin position="21"/>
        <end position="41"/>
    </location>
</feature>
<feature type="domain" description="Protein kinase" evidence="4">
    <location>
        <begin position="166"/>
        <end position="445"/>
    </location>
</feature>
<feature type="region of interest" description="Disordered" evidence="6">
    <location>
        <begin position="72"/>
        <end position="135"/>
    </location>
</feature>
<feature type="region of interest" description="Disordered" evidence="6">
    <location>
        <begin position="425"/>
        <end position="484"/>
    </location>
</feature>
<feature type="compositionally biased region" description="Basic and acidic residues" evidence="6">
    <location>
        <begin position="91"/>
        <end position="105"/>
    </location>
</feature>
<feature type="compositionally biased region" description="Polar residues" evidence="6">
    <location>
        <begin position="125"/>
        <end position="134"/>
    </location>
</feature>
<feature type="compositionally biased region" description="Basic and acidic residues" evidence="6">
    <location>
        <begin position="460"/>
        <end position="484"/>
    </location>
</feature>
<feature type="active site" description="Proton acceptor" evidence="4 5">
    <location>
        <position position="292"/>
    </location>
</feature>
<feature type="binding site" evidence="4">
    <location>
        <begin position="172"/>
        <end position="180"/>
    </location>
    <ligand>
        <name>ATP</name>
        <dbReference type="ChEBI" id="CHEBI:30616"/>
    </ligand>
</feature>
<feature type="binding site" evidence="4">
    <location>
        <position position="194"/>
    </location>
    <ligand>
        <name>ATP</name>
        <dbReference type="ChEBI" id="CHEBI:30616"/>
    </ligand>
</feature>
<feature type="modified residue" description="Phosphothreonine" evidence="2">
    <location>
        <position position="155"/>
    </location>
</feature>
<feature type="modified residue" description="Phosphotyrosine" evidence="2">
    <location>
        <position position="239"/>
    </location>
</feature>
<feature type="modified residue" description="Phosphoserine" evidence="2">
    <location>
        <position position="296"/>
    </location>
</feature>
<feature type="modified residue" description="Phosphothreonine" evidence="2">
    <location>
        <position position="326"/>
    </location>
</feature>
<feature type="modified residue" description="Phosphothreonine" evidence="2">
    <location>
        <position position="331"/>
    </location>
</feature>
<feature type="modified residue" description="Phosphotyrosine" evidence="2">
    <location>
        <position position="339"/>
    </location>
</feature>
<comment type="catalytic activity">
    <reaction>
        <text>L-seryl-[protein] + ATP = O-phospho-L-seryl-[protein] + ADP + H(+)</text>
        <dbReference type="Rhea" id="RHEA:17989"/>
        <dbReference type="Rhea" id="RHEA-COMP:9863"/>
        <dbReference type="Rhea" id="RHEA-COMP:11604"/>
        <dbReference type="ChEBI" id="CHEBI:15378"/>
        <dbReference type="ChEBI" id="CHEBI:29999"/>
        <dbReference type="ChEBI" id="CHEBI:30616"/>
        <dbReference type="ChEBI" id="CHEBI:83421"/>
        <dbReference type="ChEBI" id="CHEBI:456216"/>
        <dbReference type="EC" id="2.7.11.1"/>
    </reaction>
</comment>
<comment type="catalytic activity">
    <reaction>
        <text>L-threonyl-[protein] + ATP = O-phospho-L-threonyl-[protein] + ADP + H(+)</text>
        <dbReference type="Rhea" id="RHEA:46608"/>
        <dbReference type="Rhea" id="RHEA-COMP:11060"/>
        <dbReference type="Rhea" id="RHEA-COMP:11605"/>
        <dbReference type="ChEBI" id="CHEBI:15378"/>
        <dbReference type="ChEBI" id="CHEBI:30013"/>
        <dbReference type="ChEBI" id="CHEBI:30616"/>
        <dbReference type="ChEBI" id="CHEBI:61977"/>
        <dbReference type="ChEBI" id="CHEBI:456216"/>
        <dbReference type="EC" id="2.7.11.1"/>
    </reaction>
</comment>
<comment type="subcellular location">
    <subcellularLocation>
        <location evidence="1">Cell membrane</location>
        <topology evidence="1">Single-pass membrane protein</topology>
    </subcellularLocation>
</comment>
<comment type="similarity">
    <text evidence="4">Belongs to the protein kinase superfamily. Ser/Thr protein kinase family.</text>
</comment>
<dbReference type="EC" id="2.7.11.1"/>
<dbReference type="EMBL" id="AC051626">
    <property type="status" value="NOT_ANNOTATED_CDS"/>
    <property type="molecule type" value="Genomic_DNA"/>
</dbReference>
<dbReference type="EMBL" id="AC069328">
    <property type="status" value="NOT_ANNOTATED_CDS"/>
    <property type="molecule type" value="Genomic_DNA"/>
</dbReference>
<dbReference type="EMBL" id="CP002688">
    <property type="protein sequence ID" value="AED92571.1"/>
    <property type="molecule type" value="Genomic_DNA"/>
</dbReference>
<dbReference type="EMBL" id="CP002688">
    <property type="protein sequence ID" value="AED92572.1"/>
    <property type="molecule type" value="Genomic_DNA"/>
</dbReference>
<dbReference type="EMBL" id="CP002688">
    <property type="protein sequence ID" value="ANM71166.1"/>
    <property type="molecule type" value="Genomic_DNA"/>
</dbReference>
<dbReference type="EMBL" id="CP002688">
    <property type="protein sequence ID" value="ANM71167.1"/>
    <property type="molecule type" value="Genomic_DNA"/>
</dbReference>
<dbReference type="EMBL" id="CP002688">
    <property type="protein sequence ID" value="ANM71168.1"/>
    <property type="molecule type" value="Genomic_DNA"/>
</dbReference>
<dbReference type="EMBL" id="CP002688">
    <property type="protein sequence ID" value="ANM71169.1"/>
    <property type="molecule type" value="Genomic_DNA"/>
</dbReference>
<dbReference type="EMBL" id="BT029165">
    <property type="protein sequence ID" value="ABJ17100.1"/>
    <property type="molecule type" value="mRNA"/>
</dbReference>
<dbReference type="EMBL" id="AY085517">
    <property type="protein sequence ID" value="AAM62741.1"/>
    <property type="molecule type" value="mRNA"/>
</dbReference>
<dbReference type="RefSeq" id="NP_001031898.1">
    <property type="nucleotide sequence ID" value="NM_001036821.3"/>
</dbReference>
<dbReference type="RefSeq" id="NP_001332714.1">
    <property type="nucleotide sequence ID" value="NM_001343548.1"/>
</dbReference>
<dbReference type="RefSeq" id="NP_001332715.1">
    <property type="nucleotide sequence ID" value="NM_001343549.1"/>
</dbReference>
<dbReference type="RefSeq" id="NP_001332716.1">
    <property type="nucleotide sequence ID" value="NM_001343550.1"/>
</dbReference>
<dbReference type="RefSeq" id="NP_001332717.1">
    <property type="nucleotide sequence ID" value="NM_001343547.1"/>
</dbReference>
<dbReference type="RefSeq" id="NP_197351.1">
    <property type="nucleotide sequence ID" value="NM_121855.3"/>
</dbReference>
<dbReference type="SMR" id="Q8LEB6"/>
<dbReference type="FunCoup" id="Q8LEB6">
    <property type="interactions" value="574"/>
</dbReference>
<dbReference type="STRING" id="3702.Q8LEB6"/>
<dbReference type="iPTMnet" id="Q8LEB6"/>
<dbReference type="PaxDb" id="3702-AT5G18500.2"/>
<dbReference type="ProteomicsDB" id="243134"/>
<dbReference type="EnsemblPlants" id="AT5G18500.1">
    <property type="protein sequence ID" value="AT5G18500.1"/>
    <property type="gene ID" value="AT5G18500"/>
</dbReference>
<dbReference type="EnsemblPlants" id="AT5G18500.2">
    <property type="protein sequence ID" value="AT5G18500.2"/>
    <property type="gene ID" value="AT5G18500"/>
</dbReference>
<dbReference type="EnsemblPlants" id="AT5G18500.3">
    <property type="protein sequence ID" value="AT5G18500.3"/>
    <property type="gene ID" value="AT5G18500"/>
</dbReference>
<dbReference type="EnsemblPlants" id="AT5G18500.4">
    <property type="protein sequence ID" value="AT5G18500.4"/>
    <property type="gene ID" value="AT5G18500"/>
</dbReference>
<dbReference type="EnsemblPlants" id="AT5G18500.5">
    <property type="protein sequence ID" value="AT5G18500.5"/>
    <property type="gene ID" value="AT5G18500"/>
</dbReference>
<dbReference type="EnsemblPlants" id="AT5G18500.6">
    <property type="protein sequence ID" value="AT5G18500.6"/>
    <property type="gene ID" value="AT5G18500"/>
</dbReference>
<dbReference type="GeneID" id="831968"/>
<dbReference type="Gramene" id="AT5G18500.1">
    <property type="protein sequence ID" value="AT5G18500.1"/>
    <property type="gene ID" value="AT5G18500"/>
</dbReference>
<dbReference type="Gramene" id="AT5G18500.2">
    <property type="protein sequence ID" value="AT5G18500.2"/>
    <property type="gene ID" value="AT5G18500"/>
</dbReference>
<dbReference type="Gramene" id="AT5G18500.3">
    <property type="protein sequence ID" value="AT5G18500.3"/>
    <property type="gene ID" value="AT5G18500"/>
</dbReference>
<dbReference type="Gramene" id="AT5G18500.4">
    <property type="protein sequence ID" value="AT5G18500.4"/>
    <property type="gene ID" value="AT5G18500"/>
</dbReference>
<dbReference type="Gramene" id="AT5G18500.5">
    <property type="protein sequence ID" value="AT5G18500.5"/>
    <property type="gene ID" value="AT5G18500"/>
</dbReference>
<dbReference type="Gramene" id="AT5G18500.6">
    <property type="protein sequence ID" value="AT5G18500.6"/>
    <property type="gene ID" value="AT5G18500"/>
</dbReference>
<dbReference type="KEGG" id="ath:AT5G18500"/>
<dbReference type="Araport" id="AT5G18500"/>
<dbReference type="TAIR" id="AT5G18500"/>
<dbReference type="eggNOG" id="KOG1187">
    <property type="taxonomic scope" value="Eukaryota"/>
</dbReference>
<dbReference type="HOGENOM" id="CLU_000288_4_1_1"/>
<dbReference type="InParanoid" id="Q8LEB6"/>
<dbReference type="OMA" id="NGRRNQC"/>
<dbReference type="OrthoDB" id="4062651at2759"/>
<dbReference type="PhylomeDB" id="Q8LEB6"/>
<dbReference type="PRO" id="PR:Q8LEB6"/>
<dbReference type="Proteomes" id="UP000006548">
    <property type="component" value="Chromosome 5"/>
</dbReference>
<dbReference type="ExpressionAtlas" id="Q8LEB6">
    <property type="expression patterns" value="baseline and differential"/>
</dbReference>
<dbReference type="GO" id="GO:0005886">
    <property type="term" value="C:plasma membrane"/>
    <property type="evidence" value="ECO:0007669"/>
    <property type="project" value="UniProtKB-SubCell"/>
</dbReference>
<dbReference type="GO" id="GO:0005524">
    <property type="term" value="F:ATP binding"/>
    <property type="evidence" value="ECO:0007669"/>
    <property type="project" value="UniProtKB-KW"/>
</dbReference>
<dbReference type="GO" id="GO:0106310">
    <property type="term" value="F:protein serine kinase activity"/>
    <property type="evidence" value="ECO:0007669"/>
    <property type="project" value="RHEA"/>
</dbReference>
<dbReference type="GO" id="GO:0004674">
    <property type="term" value="F:protein serine/threonine kinase activity"/>
    <property type="evidence" value="ECO:0007669"/>
    <property type="project" value="UniProtKB-KW"/>
</dbReference>
<dbReference type="CDD" id="cd14066">
    <property type="entry name" value="STKc_IRAK"/>
    <property type="match status" value="1"/>
</dbReference>
<dbReference type="FunFam" id="3.30.200.20:FF:000083">
    <property type="entry name" value="Putative receptor-like protein kinase"/>
    <property type="match status" value="1"/>
</dbReference>
<dbReference type="FunFam" id="1.10.510.10:FF:000035">
    <property type="entry name" value="Putative receptor-like serine/threonine-protein kinase"/>
    <property type="match status" value="1"/>
</dbReference>
<dbReference type="Gene3D" id="3.30.200.20">
    <property type="entry name" value="Phosphorylase Kinase, domain 1"/>
    <property type="match status" value="1"/>
</dbReference>
<dbReference type="Gene3D" id="1.10.510.10">
    <property type="entry name" value="Transferase(Phosphotransferase) domain 1"/>
    <property type="match status" value="1"/>
</dbReference>
<dbReference type="InterPro" id="IPR011009">
    <property type="entry name" value="Kinase-like_dom_sf"/>
</dbReference>
<dbReference type="InterPro" id="IPR000719">
    <property type="entry name" value="Prot_kinase_dom"/>
</dbReference>
<dbReference type="InterPro" id="IPR017441">
    <property type="entry name" value="Protein_kinase_ATP_BS"/>
</dbReference>
<dbReference type="InterPro" id="IPR052232">
    <property type="entry name" value="RLK_Ser/Thr-Kinase"/>
</dbReference>
<dbReference type="InterPro" id="IPR008271">
    <property type="entry name" value="Ser/Thr_kinase_AS"/>
</dbReference>
<dbReference type="PANTHER" id="PTHR47984">
    <property type="entry name" value="OS01G0323000 PROTEIN"/>
    <property type="match status" value="1"/>
</dbReference>
<dbReference type="PANTHER" id="PTHR47984:SF13">
    <property type="entry name" value="PROTEIN KINASE DOMAIN-CONTAINING PROTEIN"/>
    <property type="match status" value="1"/>
</dbReference>
<dbReference type="Pfam" id="PF00069">
    <property type="entry name" value="Pkinase"/>
    <property type="match status" value="1"/>
</dbReference>
<dbReference type="SMART" id="SM00220">
    <property type="entry name" value="S_TKc"/>
    <property type="match status" value="1"/>
</dbReference>
<dbReference type="SUPFAM" id="SSF56112">
    <property type="entry name" value="Protein kinase-like (PK-like)"/>
    <property type="match status" value="1"/>
</dbReference>
<dbReference type="PROSITE" id="PS00107">
    <property type="entry name" value="PROTEIN_KINASE_ATP"/>
    <property type="match status" value="1"/>
</dbReference>
<dbReference type="PROSITE" id="PS50011">
    <property type="entry name" value="PROTEIN_KINASE_DOM"/>
    <property type="match status" value="1"/>
</dbReference>
<dbReference type="PROSITE" id="PS00108">
    <property type="entry name" value="PROTEIN_KINASE_ST"/>
    <property type="match status" value="1"/>
</dbReference>
<proteinExistence type="evidence at transcript level"/>
<reference key="1">
    <citation type="journal article" date="2000" name="Nature">
        <title>Sequence and analysis of chromosome 5 of the plant Arabidopsis thaliana.</title>
        <authorList>
            <person name="Tabata S."/>
            <person name="Kaneko T."/>
            <person name="Nakamura Y."/>
            <person name="Kotani H."/>
            <person name="Kato T."/>
            <person name="Asamizu E."/>
            <person name="Miyajima N."/>
            <person name="Sasamoto S."/>
            <person name="Kimura T."/>
            <person name="Hosouchi T."/>
            <person name="Kawashima K."/>
            <person name="Kohara M."/>
            <person name="Matsumoto M."/>
            <person name="Matsuno A."/>
            <person name="Muraki A."/>
            <person name="Nakayama S."/>
            <person name="Nakazaki N."/>
            <person name="Naruo K."/>
            <person name="Okumura S."/>
            <person name="Shinpo S."/>
            <person name="Takeuchi C."/>
            <person name="Wada T."/>
            <person name="Watanabe A."/>
            <person name="Yamada M."/>
            <person name="Yasuda M."/>
            <person name="Sato S."/>
            <person name="de la Bastide M."/>
            <person name="Huang E."/>
            <person name="Spiegel L."/>
            <person name="Gnoj L."/>
            <person name="O'Shaughnessy A."/>
            <person name="Preston R."/>
            <person name="Habermann K."/>
            <person name="Murray J."/>
            <person name="Johnson D."/>
            <person name="Rohlfing T."/>
            <person name="Nelson J."/>
            <person name="Stoneking T."/>
            <person name="Pepin K."/>
            <person name="Spieth J."/>
            <person name="Sekhon M."/>
            <person name="Armstrong J."/>
            <person name="Becker M."/>
            <person name="Belter E."/>
            <person name="Cordum H."/>
            <person name="Cordes M."/>
            <person name="Courtney L."/>
            <person name="Courtney W."/>
            <person name="Dante M."/>
            <person name="Du H."/>
            <person name="Edwards J."/>
            <person name="Fryman J."/>
            <person name="Haakensen B."/>
            <person name="Lamar E."/>
            <person name="Latreille P."/>
            <person name="Leonard S."/>
            <person name="Meyer R."/>
            <person name="Mulvaney E."/>
            <person name="Ozersky P."/>
            <person name="Riley A."/>
            <person name="Strowmatt C."/>
            <person name="Wagner-McPherson C."/>
            <person name="Wollam A."/>
            <person name="Yoakum M."/>
            <person name="Bell M."/>
            <person name="Dedhia N."/>
            <person name="Parnell L."/>
            <person name="Shah R."/>
            <person name="Rodriguez M."/>
            <person name="Hoon See L."/>
            <person name="Vil D."/>
            <person name="Baker J."/>
            <person name="Kirchoff K."/>
            <person name="Toth K."/>
            <person name="King L."/>
            <person name="Bahret A."/>
            <person name="Miller B."/>
            <person name="Marra M.A."/>
            <person name="Martienssen R."/>
            <person name="McCombie W.R."/>
            <person name="Wilson R.K."/>
            <person name="Murphy G."/>
            <person name="Bancroft I."/>
            <person name="Volckaert G."/>
            <person name="Wambutt R."/>
            <person name="Duesterhoeft A."/>
            <person name="Stiekema W."/>
            <person name="Pohl T."/>
            <person name="Entian K.-D."/>
            <person name="Terryn N."/>
            <person name="Hartley N."/>
            <person name="Bent E."/>
            <person name="Johnson S."/>
            <person name="Langham S.-A."/>
            <person name="McCullagh B."/>
            <person name="Robben J."/>
            <person name="Grymonprez B."/>
            <person name="Zimmermann W."/>
            <person name="Ramsperger U."/>
            <person name="Wedler H."/>
            <person name="Balke K."/>
            <person name="Wedler E."/>
            <person name="Peters S."/>
            <person name="van Staveren M."/>
            <person name="Dirkse W."/>
            <person name="Mooijman P."/>
            <person name="Klein Lankhorst R."/>
            <person name="Weitzenegger T."/>
            <person name="Bothe G."/>
            <person name="Rose M."/>
            <person name="Hauf J."/>
            <person name="Berneiser S."/>
            <person name="Hempel S."/>
            <person name="Feldpausch M."/>
            <person name="Lamberth S."/>
            <person name="Villarroel R."/>
            <person name="Gielen J."/>
            <person name="Ardiles W."/>
            <person name="Bents O."/>
            <person name="Lemcke K."/>
            <person name="Kolesov G."/>
            <person name="Mayer K.F.X."/>
            <person name="Rudd S."/>
            <person name="Schoof H."/>
            <person name="Schueller C."/>
            <person name="Zaccaria P."/>
            <person name="Mewes H.-W."/>
            <person name="Bevan M."/>
            <person name="Fransz P.F."/>
        </authorList>
    </citation>
    <scope>NUCLEOTIDE SEQUENCE [LARGE SCALE GENOMIC DNA]</scope>
    <source>
        <strain>cv. Columbia</strain>
    </source>
</reference>
<reference key="2">
    <citation type="journal article" date="2017" name="Plant J.">
        <title>Araport11: a complete reannotation of the Arabidopsis thaliana reference genome.</title>
        <authorList>
            <person name="Cheng C.Y."/>
            <person name="Krishnakumar V."/>
            <person name="Chan A.P."/>
            <person name="Thibaud-Nissen F."/>
            <person name="Schobel S."/>
            <person name="Town C.D."/>
        </authorList>
    </citation>
    <scope>GENOME REANNOTATION</scope>
    <source>
        <strain>cv. Columbia</strain>
    </source>
</reference>
<reference key="3">
    <citation type="submission" date="2006-10" db="EMBL/GenBank/DDBJ databases">
        <title>Arabidopsis ORF Clone.</title>
        <authorList>
            <person name="Bautista V.R."/>
            <person name="Kim C.J."/>
            <person name="Chen H."/>
            <person name="Quinitio C."/>
            <person name="Ecker J.R."/>
        </authorList>
    </citation>
    <scope>NUCLEOTIDE SEQUENCE [LARGE SCALE MRNA]</scope>
    <source>
        <strain>cv. Columbia</strain>
    </source>
</reference>
<reference key="4">
    <citation type="submission" date="2002-03" db="EMBL/GenBank/DDBJ databases">
        <title>Full-length cDNA from Arabidopsis thaliana.</title>
        <authorList>
            <person name="Brover V.V."/>
            <person name="Troukhan M.E."/>
            <person name="Alexandrov N.A."/>
            <person name="Lu Y.-P."/>
            <person name="Flavell R.B."/>
            <person name="Feldmann K.A."/>
        </authorList>
    </citation>
    <scope>NUCLEOTIDE SEQUENCE [LARGE SCALE MRNA]</scope>
</reference>
<organism>
    <name type="scientific">Arabidopsis thaliana</name>
    <name type="common">Mouse-ear cress</name>
    <dbReference type="NCBI Taxonomy" id="3702"/>
    <lineage>
        <taxon>Eukaryota</taxon>
        <taxon>Viridiplantae</taxon>
        <taxon>Streptophyta</taxon>
        <taxon>Embryophyta</taxon>
        <taxon>Tracheophyta</taxon>
        <taxon>Spermatophyta</taxon>
        <taxon>Magnoliopsida</taxon>
        <taxon>eudicotyledons</taxon>
        <taxon>Gunneridae</taxon>
        <taxon>Pentapetalae</taxon>
        <taxon>rosids</taxon>
        <taxon>malvids</taxon>
        <taxon>Brassicales</taxon>
        <taxon>Brassicaceae</taxon>
        <taxon>Camelineae</taxon>
        <taxon>Arabidopsis</taxon>
    </lineage>
</organism>
<name>Y5185_ARATH</name>
<gene>
    <name type="ordered locus">At5g18500</name>
    <name type="ORF">T28N17.1</name>
</gene>
<sequence>MGSGLNDTLSRNYNGLELWEIIVIVLSAIFVVVLAISLWLTFRRKTSRSSSNLIPVSRQIPPSVPEEIKEIRVDEVSSSNGGNGYPSISEKFGDKEPEKGIKAESENGDSSRSGSFNHLEKKDGSSVSSANPLTAPSPLSGLPEFSHLGWGHWFTLRDLQMATNQFSRDNIIGDGGYGVVYRGNLVNGTPVAVKKLLNNLGQADKDFRVEVEAIGHVRHKNLVRLLGYCMEGTQRMLVYEYVNNGNLEQWLRGDNQNHEYLTWEARVKILIGTAKALAYLHEAIEPKVVHRDIKSSNILIDDKFNSKISDFGLAKLLGADKSFITTRVMGTFGYVAPEYANSGLLNEKSDVYSFGVVLLEAITGRYPVDYARPPPEVHLVEWLKMMVQQRRSEEVVDPNLETKPSTSALKRTLLTALRCVDPMSEKRPRMSQVARMLESEEYPIAREDRRRRRSQNGTTRDSDPPRNSTDTDKSEYHDLKPEGG</sequence>